<dbReference type="EC" id="1.-.-.-"/>
<dbReference type="EMBL" id="U00096">
    <property type="protein sequence ID" value="AAT48134.1"/>
    <property type="molecule type" value="Genomic_DNA"/>
</dbReference>
<dbReference type="EMBL" id="AP009048">
    <property type="protein sequence ID" value="BAE76490.1"/>
    <property type="molecule type" value="Genomic_DNA"/>
</dbReference>
<dbReference type="PIR" id="A64922">
    <property type="entry name" value="A64922"/>
</dbReference>
<dbReference type="RefSeq" id="WP_000250656.1">
    <property type="nucleotide sequence ID" value="NZ_SSZK01000001.1"/>
</dbReference>
<dbReference type="RefSeq" id="YP_025305.1">
    <property type="nucleotide sequence ID" value="NC_000913.3"/>
</dbReference>
<dbReference type="PDB" id="1OG6">
    <property type="method" value="X-ray"/>
    <property type="resolution" value="2.80 A"/>
    <property type="chains" value="A/B/C=2-298"/>
</dbReference>
<dbReference type="PDB" id="1UR3">
    <property type="method" value="X-ray"/>
    <property type="resolution" value="2.57 A"/>
    <property type="chains" value="M=2-298"/>
</dbReference>
<dbReference type="PDBsum" id="1OG6"/>
<dbReference type="PDBsum" id="1UR3"/>
<dbReference type="SMR" id="P76187"/>
<dbReference type="BioGRID" id="4263045">
    <property type="interactions" value="23"/>
</dbReference>
<dbReference type="FunCoup" id="P76187">
    <property type="interactions" value="20"/>
</dbReference>
<dbReference type="STRING" id="511145.b1647"/>
<dbReference type="DrugBank" id="DB03461">
    <property type="generic name" value="Nicotinamide adenine dinucleotide phosphate"/>
</dbReference>
<dbReference type="TCDB" id="8.A.5.1.7">
    <property type="family name" value="the voltage-gated k(+) channel Beta-subunit (kvBeta) family"/>
</dbReference>
<dbReference type="jPOST" id="P76187"/>
<dbReference type="PaxDb" id="511145-b1647"/>
<dbReference type="EnsemblBacteria" id="AAT48134">
    <property type="protein sequence ID" value="AAT48134"/>
    <property type="gene ID" value="b1647"/>
</dbReference>
<dbReference type="GeneID" id="946960"/>
<dbReference type="KEGG" id="ecj:JW1639"/>
<dbReference type="KEGG" id="eco:b1647"/>
<dbReference type="KEGG" id="ecoc:C3026_09455"/>
<dbReference type="PATRIC" id="fig|1411691.4.peg.612"/>
<dbReference type="EchoBASE" id="EB3196"/>
<dbReference type="eggNOG" id="COG4989">
    <property type="taxonomic scope" value="Bacteria"/>
</dbReference>
<dbReference type="HOGENOM" id="CLU_023205_8_0_6"/>
<dbReference type="InParanoid" id="P76187"/>
<dbReference type="OMA" id="VVYAWVM"/>
<dbReference type="OrthoDB" id="9768793at2"/>
<dbReference type="PhylomeDB" id="P76187"/>
<dbReference type="BioCyc" id="EcoCyc:G6887-MONOMER"/>
<dbReference type="EvolutionaryTrace" id="P76187"/>
<dbReference type="PRO" id="PR:P76187"/>
<dbReference type="Proteomes" id="UP000000625">
    <property type="component" value="Chromosome"/>
</dbReference>
<dbReference type="GO" id="GO:0005829">
    <property type="term" value="C:cytosol"/>
    <property type="evidence" value="ECO:0000314"/>
    <property type="project" value="EcoCyc"/>
</dbReference>
<dbReference type="GO" id="GO:0016491">
    <property type="term" value="F:oxidoreductase activity"/>
    <property type="evidence" value="ECO:0007669"/>
    <property type="project" value="UniProtKB-KW"/>
</dbReference>
<dbReference type="CDD" id="cd19092">
    <property type="entry name" value="AKR_BsYcsN_EcYdhF-like"/>
    <property type="match status" value="1"/>
</dbReference>
<dbReference type="FunFam" id="3.20.20.100:FF:000008">
    <property type="entry name" value="Aldo/keto reductase family oxidoreductase"/>
    <property type="match status" value="1"/>
</dbReference>
<dbReference type="Gene3D" id="3.20.20.100">
    <property type="entry name" value="NADP-dependent oxidoreductase domain"/>
    <property type="match status" value="1"/>
</dbReference>
<dbReference type="InterPro" id="IPR020471">
    <property type="entry name" value="AKR"/>
</dbReference>
<dbReference type="InterPro" id="IPR050523">
    <property type="entry name" value="AKR_Detox_Biosynth"/>
</dbReference>
<dbReference type="InterPro" id="IPR023210">
    <property type="entry name" value="NADP_OxRdtase_dom"/>
</dbReference>
<dbReference type="InterPro" id="IPR036812">
    <property type="entry name" value="NADP_OxRdtase_dom_sf"/>
</dbReference>
<dbReference type="PANTHER" id="PTHR43364">
    <property type="entry name" value="NADH-SPECIFIC METHYLGLYOXAL REDUCTASE-RELATED"/>
    <property type="match status" value="1"/>
</dbReference>
<dbReference type="PANTHER" id="PTHR43364:SF1">
    <property type="entry name" value="OXIDOREDUCTASE YDHF"/>
    <property type="match status" value="1"/>
</dbReference>
<dbReference type="Pfam" id="PF00248">
    <property type="entry name" value="Aldo_ket_red"/>
    <property type="match status" value="1"/>
</dbReference>
<dbReference type="PRINTS" id="PR00069">
    <property type="entry name" value="ALDKETRDTASE"/>
</dbReference>
<dbReference type="SUPFAM" id="SSF51430">
    <property type="entry name" value="NAD(P)-linked oxidoreductase"/>
    <property type="match status" value="1"/>
</dbReference>
<keyword id="KW-0002">3D-structure</keyword>
<keyword id="KW-0521">NADP</keyword>
<keyword id="KW-0560">Oxidoreductase</keyword>
<keyword id="KW-1185">Reference proteome</keyword>
<proteinExistence type="evidence at protein level"/>
<sequence length="298" mass="33676">MVQRITIAPQGPEFSRFVMGYWRLMDWNMSARQLVSFIEEHLDLGVTTVDHADIYGGYQCEAAFGEALKLAPHLRERMEIVSKCGIATTAREENVIGHYITDRDHIIKSAEQSLINLATDHLDLLLIHRPDPLMDADEVADAFKHLHQSGKVRHFGVSNFTPAQFALLQSRLPFTLATNQVEISPVHQPLLLDGTLDQLQQLRVRPMAWSCLGGGRLFNDDYFQPLRDELAVVAEELNAGSIEQVVYAWVLRLPSQPLPIIGSGKIERVRAAVEAETLKMTRQQWFRIRKAALGYDVP</sequence>
<feature type="chain" id="PRO_0000070394" description="Oxidoreductase YdhF">
    <location>
        <begin position="1"/>
        <end position="298"/>
    </location>
</feature>
<feature type="active site" description="Proton donor" evidence="1">
    <location>
        <position position="55"/>
    </location>
</feature>
<feature type="binding site" evidence="2">
    <location>
        <begin position="158"/>
        <end position="159"/>
    </location>
    <ligand>
        <name>NADP(+)</name>
        <dbReference type="ChEBI" id="CHEBI:58349"/>
    </ligand>
</feature>
<feature type="binding site" evidence="2">
    <location>
        <begin position="209"/>
        <end position="220"/>
    </location>
    <ligand>
        <name>NADP(+)</name>
        <dbReference type="ChEBI" id="CHEBI:58349"/>
    </ligand>
</feature>
<feature type="binding site" evidence="2">
    <location>
        <begin position="263"/>
        <end position="264"/>
    </location>
    <ligand>
        <name>NADP(+)</name>
        <dbReference type="ChEBI" id="CHEBI:58349"/>
    </ligand>
</feature>
<feature type="strand" evidence="5">
    <location>
        <begin position="4"/>
        <end position="6"/>
    </location>
</feature>
<feature type="strand" evidence="5">
    <location>
        <begin position="13"/>
        <end position="20"/>
    </location>
</feature>
<feature type="turn" evidence="5">
    <location>
        <begin position="22"/>
        <end position="28"/>
    </location>
</feature>
<feature type="helix" evidence="5">
    <location>
        <begin position="31"/>
        <end position="44"/>
    </location>
</feature>
<feature type="strand" evidence="5">
    <location>
        <begin position="48"/>
        <end position="50"/>
    </location>
</feature>
<feature type="turn" evidence="5">
    <location>
        <begin position="55"/>
        <end position="59"/>
    </location>
</feature>
<feature type="helix" evidence="5">
    <location>
        <begin position="60"/>
        <end position="70"/>
    </location>
</feature>
<feature type="helix" evidence="5">
    <location>
        <begin position="72"/>
        <end position="74"/>
    </location>
</feature>
<feature type="turn" evidence="5">
    <location>
        <begin position="75"/>
        <end position="77"/>
    </location>
</feature>
<feature type="strand" evidence="5">
    <location>
        <begin position="79"/>
        <end position="84"/>
    </location>
</feature>
<feature type="strand" evidence="4">
    <location>
        <begin position="91"/>
        <end position="93"/>
    </location>
</feature>
<feature type="helix" evidence="5">
    <location>
        <begin position="103"/>
        <end position="117"/>
    </location>
</feature>
<feature type="strand" evidence="5">
    <location>
        <begin position="122"/>
        <end position="127"/>
    </location>
</feature>
<feature type="helix" evidence="5">
    <location>
        <begin position="136"/>
        <end position="148"/>
    </location>
</feature>
<feature type="strand" evidence="5">
    <location>
        <begin position="155"/>
        <end position="159"/>
    </location>
</feature>
<feature type="helix" evidence="5">
    <location>
        <begin position="162"/>
        <end position="169"/>
    </location>
</feature>
<feature type="strand" evidence="5">
    <location>
        <begin position="179"/>
        <end position="182"/>
    </location>
</feature>
<feature type="helix" evidence="5">
    <location>
        <begin position="189"/>
        <end position="191"/>
    </location>
</feature>
<feature type="helix" evidence="5">
    <location>
        <begin position="195"/>
        <end position="202"/>
    </location>
</feature>
<feature type="strand" evidence="5">
    <location>
        <begin position="207"/>
        <end position="209"/>
    </location>
</feature>
<feature type="turn" evidence="5">
    <location>
        <begin position="213"/>
        <end position="215"/>
    </location>
</feature>
<feature type="strand" evidence="5">
    <location>
        <begin position="217"/>
        <end position="219"/>
    </location>
</feature>
<feature type="helix" evidence="5">
    <location>
        <begin position="221"/>
        <end position="223"/>
    </location>
</feature>
<feature type="helix" evidence="5">
    <location>
        <begin position="224"/>
        <end position="236"/>
    </location>
</feature>
<feature type="helix" evidence="5">
    <location>
        <begin position="242"/>
        <end position="251"/>
    </location>
</feature>
<feature type="strand" evidence="5">
    <location>
        <begin position="258"/>
        <end position="261"/>
    </location>
</feature>
<feature type="helix" evidence="5">
    <location>
        <begin position="266"/>
        <end position="273"/>
    </location>
</feature>
<feature type="helix" evidence="5">
    <location>
        <begin position="274"/>
        <end position="277"/>
    </location>
</feature>
<feature type="helix" evidence="5">
    <location>
        <begin position="282"/>
        <end position="293"/>
    </location>
</feature>
<gene>
    <name type="primary">ydhF</name>
    <name type="ordered locus">b1647</name>
    <name type="ordered locus">JW1639</name>
</gene>
<evidence type="ECO:0000250" key="1"/>
<evidence type="ECO:0000269" key="2">
    <source>
    </source>
</evidence>
<evidence type="ECO:0000305" key="3"/>
<evidence type="ECO:0007829" key="4">
    <source>
        <dbReference type="PDB" id="1OG6"/>
    </source>
</evidence>
<evidence type="ECO:0007829" key="5">
    <source>
        <dbReference type="PDB" id="1UR3"/>
    </source>
</evidence>
<name>YDHF_ECOLI</name>
<accession>P76187</accession>
<accession>Q2MB66</accession>
<accession>Q6BF80</accession>
<organism>
    <name type="scientific">Escherichia coli (strain K12)</name>
    <dbReference type="NCBI Taxonomy" id="83333"/>
    <lineage>
        <taxon>Bacteria</taxon>
        <taxon>Pseudomonadati</taxon>
        <taxon>Pseudomonadota</taxon>
        <taxon>Gammaproteobacteria</taxon>
        <taxon>Enterobacterales</taxon>
        <taxon>Enterobacteriaceae</taxon>
        <taxon>Escherichia</taxon>
    </lineage>
</organism>
<protein>
    <recommendedName>
        <fullName>Oxidoreductase YdhF</fullName>
        <ecNumber>1.-.-.-</ecNumber>
    </recommendedName>
</protein>
<comment type="function">
    <text evidence="3">May function as oxidoreductase.</text>
</comment>
<comment type="similarity">
    <text evidence="3">Belongs to the aldo/keto reductase family. Aldo/keto reductase 2 subfamily.</text>
</comment>
<reference key="1">
    <citation type="journal article" date="1997" name="Science">
        <title>The complete genome sequence of Escherichia coli K-12.</title>
        <authorList>
            <person name="Blattner F.R."/>
            <person name="Plunkett G. III"/>
            <person name="Bloch C.A."/>
            <person name="Perna N.T."/>
            <person name="Burland V."/>
            <person name="Riley M."/>
            <person name="Collado-Vides J."/>
            <person name="Glasner J.D."/>
            <person name="Rode C.K."/>
            <person name="Mayhew G.F."/>
            <person name="Gregor J."/>
            <person name="Davis N.W."/>
            <person name="Kirkpatrick H.A."/>
            <person name="Goeden M.A."/>
            <person name="Rose D.J."/>
            <person name="Mau B."/>
            <person name="Shao Y."/>
        </authorList>
    </citation>
    <scope>NUCLEOTIDE SEQUENCE [LARGE SCALE GENOMIC DNA]</scope>
    <source>
        <strain>K12 / MG1655 / ATCC 47076</strain>
    </source>
</reference>
<reference key="2">
    <citation type="journal article" date="2006" name="Nucleic Acids Res.">
        <title>Escherichia coli K-12: a cooperatively developed annotation snapshot -- 2005.</title>
        <authorList>
            <person name="Riley M."/>
            <person name="Abe T."/>
            <person name="Arnaud M.B."/>
            <person name="Berlyn M.K.B."/>
            <person name="Blattner F.R."/>
            <person name="Chaudhuri R.R."/>
            <person name="Glasner J.D."/>
            <person name="Horiuchi T."/>
            <person name="Keseler I.M."/>
            <person name="Kosuge T."/>
            <person name="Mori H."/>
            <person name="Perna N.T."/>
            <person name="Plunkett G. III"/>
            <person name="Rudd K.E."/>
            <person name="Serres M.H."/>
            <person name="Thomas G.H."/>
            <person name="Thomson N.R."/>
            <person name="Wishart D."/>
            <person name="Wanner B.L."/>
        </authorList>
    </citation>
    <scope>SEQUENCE REVISION TO 247</scope>
</reference>
<reference key="3">
    <citation type="journal article" date="2006" name="Mol. Syst. Biol.">
        <title>Highly accurate genome sequences of Escherichia coli K-12 strains MG1655 and W3110.</title>
        <authorList>
            <person name="Hayashi K."/>
            <person name="Morooka N."/>
            <person name="Yamamoto Y."/>
            <person name="Fujita K."/>
            <person name="Isono K."/>
            <person name="Choi S."/>
            <person name="Ohtsubo E."/>
            <person name="Baba T."/>
            <person name="Wanner B.L."/>
            <person name="Mori H."/>
            <person name="Horiuchi T."/>
        </authorList>
    </citation>
    <scope>NUCLEOTIDE SEQUENCE [LARGE SCALE GENOMIC DNA]</scope>
    <source>
        <strain>K12 / W3110 / ATCC 27325 / DSM 5911</strain>
    </source>
</reference>
<reference key="4">
    <citation type="journal article" date="2003" name="J. Struct. Funct. Genomics">
        <title>Structural genomics of highly conserved microbial genes of unknown function in search of new antibacterial targets.</title>
        <authorList>
            <person name="Abergel C."/>
            <person name="Coutard B."/>
            <person name="Byrne D."/>
            <person name="Chenivesse S."/>
            <person name="Claude J.-B."/>
            <person name="Deregnaucourt C."/>
            <person name="Fricaux T."/>
            <person name="Gianesini-Boutreux C."/>
            <person name="Jeudy S."/>
            <person name="Lebrun R."/>
            <person name="Maza C."/>
            <person name="Notredame C."/>
            <person name="Poirot O."/>
            <person name="Suhre K."/>
            <person name="Varagnol M."/>
            <person name="Claverie J.-M."/>
        </authorList>
    </citation>
    <scope>X-RAY CRYSTALLOGRAPHY (2.57 ANGSTROMS) OF 2-298 IN COMPLEX WITH NADP</scope>
</reference>